<feature type="chain" id="PRO_0000160739" description="NADP-dependent isopropanol dehydrogenase">
    <location>
        <begin position="1"/>
        <end position="351"/>
    </location>
</feature>
<feature type="binding site" evidence="1 2 4">
    <location>
        <position position="37"/>
    </location>
    <ligand>
        <name>Zn(2+)</name>
        <dbReference type="ChEBI" id="CHEBI:29105"/>
        <note>catalytic</note>
    </ligand>
</feature>
<feature type="binding site" evidence="1 2 4">
    <location>
        <position position="59"/>
    </location>
    <ligand>
        <name>Zn(2+)</name>
        <dbReference type="ChEBI" id="CHEBI:29105"/>
        <note>catalytic</note>
    </ligand>
</feature>
<feature type="binding site" evidence="1 2 4">
    <location>
        <position position="60"/>
    </location>
    <ligand>
        <name>Zn(2+)</name>
        <dbReference type="ChEBI" id="CHEBI:29105"/>
        <note>catalytic</note>
    </ligand>
</feature>
<feature type="binding site" evidence="1 2 4">
    <location>
        <position position="150"/>
    </location>
    <ligand>
        <name>Zn(2+)</name>
        <dbReference type="ChEBI" id="CHEBI:29105"/>
        <note>catalytic</note>
    </ligand>
</feature>
<feature type="binding site" evidence="4">
    <location>
        <begin position="175"/>
        <end position="178"/>
    </location>
    <ligand>
        <name>NADP(+)</name>
        <dbReference type="ChEBI" id="CHEBI:58349"/>
    </ligand>
</feature>
<feature type="binding site" evidence="4">
    <location>
        <begin position="198"/>
        <end position="200"/>
    </location>
    <ligand>
        <name>NADP(+)</name>
        <dbReference type="ChEBI" id="CHEBI:58349"/>
    </ligand>
</feature>
<feature type="binding site" evidence="4">
    <location>
        <position position="218"/>
    </location>
    <ligand>
        <name>NADP(+)</name>
        <dbReference type="ChEBI" id="CHEBI:58349"/>
    </ligand>
</feature>
<feature type="binding site" evidence="4">
    <location>
        <begin position="265"/>
        <end position="267"/>
    </location>
    <ligand>
        <name>NADP(+)</name>
        <dbReference type="ChEBI" id="CHEBI:58349"/>
    </ligand>
</feature>
<feature type="binding site" evidence="4">
    <location>
        <position position="340"/>
    </location>
    <ligand>
        <name>NADP(+)</name>
        <dbReference type="ChEBI" id="CHEBI:58349"/>
    </ligand>
</feature>
<feature type="strand" evidence="6">
    <location>
        <begin position="2"/>
        <end position="8"/>
    </location>
</feature>
<feature type="strand" evidence="7">
    <location>
        <begin position="11"/>
        <end position="16"/>
    </location>
</feature>
<feature type="strand" evidence="7">
    <location>
        <begin position="27"/>
        <end position="34"/>
    </location>
</feature>
<feature type="helix" evidence="7">
    <location>
        <begin position="38"/>
        <end position="46"/>
    </location>
</feature>
<feature type="strand" evidence="7">
    <location>
        <begin position="53"/>
        <end position="56"/>
    </location>
</feature>
<feature type="strand" evidence="7">
    <location>
        <begin position="61"/>
        <end position="68"/>
    </location>
</feature>
<feature type="strand" evidence="7">
    <location>
        <begin position="80"/>
        <end position="83"/>
    </location>
</feature>
<feature type="strand" evidence="7">
    <location>
        <begin position="90"/>
        <end position="92"/>
    </location>
</feature>
<feature type="helix" evidence="7">
    <location>
        <begin position="93"/>
        <end position="96"/>
    </location>
</feature>
<feature type="helix" evidence="7">
    <location>
        <begin position="100"/>
        <end position="102"/>
    </location>
</feature>
<feature type="turn" evidence="7">
    <location>
        <begin position="106"/>
        <end position="109"/>
    </location>
</feature>
<feature type="turn" evidence="7">
    <location>
        <begin position="113"/>
        <end position="115"/>
    </location>
</feature>
<feature type="strand" evidence="7">
    <location>
        <begin position="119"/>
        <end position="128"/>
    </location>
</feature>
<feature type="helix" evidence="7">
    <location>
        <begin position="129"/>
        <end position="132"/>
    </location>
</feature>
<feature type="helix" evidence="7">
    <location>
        <begin position="142"/>
        <end position="146"/>
    </location>
</feature>
<feature type="turn" evidence="7">
    <location>
        <begin position="147"/>
        <end position="150"/>
    </location>
</feature>
<feature type="helix" evidence="7">
    <location>
        <begin position="151"/>
        <end position="161"/>
    </location>
</feature>
<feature type="strand" evidence="6">
    <location>
        <begin position="170"/>
        <end position="173"/>
    </location>
</feature>
<feature type="helix" evidence="6">
    <location>
        <begin position="177"/>
        <end position="187"/>
    </location>
</feature>
<feature type="turn" evidence="6">
    <location>
        <begin position="188"/>
        <end position="190"/>
    </location>
</feature>
<feature type="strand" evidence="6">
    <location>
        <begin position="194"/>
        <end position="197"/>
    </location>
</feature>
<feature type="helix" evidence="6">
    <location>
        <begin position="201"/>
        <end position="210"/>
    </location>
</feature>
<feature type="strand" evidence="6">
    <location>
        <begin position="213"/>
        <end position="216"/>
    </location>
</feature>
<feature type="helix" evidence="6">
    <location>
        <begin position="218"/>
        <end position="220"/>
    </location>
</feature>
<feature type="helix" evidence="6">
    <location>
        <begin position="223"/>
        <end position="230"/>
    </location>
</feature>
<feature type="turn" evidence="6">
    <location>
        <begin position="231"/>
        <end position="233"/>
    </location>
</feature>
<feature type="strand" evidence="6">
    <location>
        <begin position="236"/>
        <end position="241"/>
    </location>
</feature>
<feature type="helix" evidence="6">
    <location>
        <begin position="248"/>
        <end position="255"/>
    </location>
</feature>
<feature type="strand" evidence="6">
    <location>
        <begin position="256"/>
        <end position="264"/>
    </location>
</feature>
<feature type="strand" evidence="6">
    <location>
        <begin position="270"/>
        <end position="277"/>
    </location>
</feature>
<feature type="turn" evidence="6">
    <location>
        <begin position="278"/>
        <end position="281"/>
    </location>
</feature>
<feature type="helix" evidence="6">
    <location>
        <begin position="282"/>
        <end position="284"/>
    </location>
</feature>
<feature type="strand" evidence="6">
    <location>
        <begin position="289"/>
        <end position="293"/>
    </location>
</feature>
<feature type="helix" evidence="8">
    <location>
        <begin position="298"/>
        <end position="301"/>
    </location>
</feature>
<feature type="helix" evidence="7">
    <location>
        <begin position="302"/>
        <end position="310"/>
    </location>
</feature>
<feature type="helix" evidence="7">
    <location>
        <begin position="316"/>
        <end position="319"/>
    </location>
</feature>
<feature type="strand" evidence="7">
    <location>
        <begin position="320"/>
        <end position="326"/>
    </location>
</feature>
<feature type="helix" evidence="7">
    <location>
        <begin position="327"/>
        <end position="329"/>
    </location>
</feature>
<feature type="helix" evidence="7">
    <location>
        <begin position="330"/>
        <end position="339"/>
    </location>
</feature>
<feature type="strand" evidence="7">
    <location>
        <begin position="345"/>
        <end position="350"/>
    </location>
</feature>
<keyword id="KW-0002">3D-structure</keyword>
<keyword id="KW-0903">Direct protein sequencing</keyword>
<keyword id="KW-0479">Metal-binding</keyword>
<keyword id="KW-0521">NADP</keyword>
<keyword id="KW-0560">Oxidoreductase</keyword>
<keyword id="KW-0862">Zinc</keyword>
<sequence>MKGFAMLGINKLGWIEKERPVAGSYDAIVRPLAVSPCTSDIHTVFEGALGDRKNMILGHEAVGEVVEVGSEVKDFKPGDRVIVPCTTPDWRSLEVQAGFQQHSNGMLAGWKFSNFKDGVFGEYFHVNDADMNLAILPKDMPLENAVMITDMMTTGFHGAELADIQMGSSVVVIGIGAVGLMGIAGAKLRGAGRIIGVGSRPICVEAAKFYGATDILNYKNGHIVDQVMKLTNGKGVDRVIMAGGGSETLSQAVSMVKPGGIISNINYHGSGDALLIPRVEWGCGMAHKTIKGGLCPGGRLRAEMLRDMVVYNRVDLSKLVTHVYHGFDHIEEALLLMKDKPKDLIKAVVIL</sequence>
<reference key="1">
    <citation type="submission" date="1999-09" db="EMBL/GenBank/DDBJ databases">
        <title>Cloning and sequence analysis of a gene encoding a medium-chain zinc-containing alcohol dehydrogenase from the Gram-positive anaerobe Clostridium beijerinckii NRRL B593.</title>
        <authorList>
            <person name="Rifaat M.M."/>
            <person name="Chen J.S."/>
        </authorList>
    </citation>
    <scope>NUCLEOTIDE SEQUENCE [GENOMIC DNA]</scope>
    <source>
        <strain>NRRL B-593</strain>
    </source>
</reference>
<reference key="2">
    <citation type="journal article" date="1993" name="J. Bacteriol.">
        <title>Purification and characterization of a primary-secondary alcohol dehydrogenase from two strains of Clostridium beijerinckii.</title>
        <authorList>
            <person name="Ismaiel A.A."/>
            <person name="Zhu C.X."/>
            <person name="Colby G.D."/>
            <person name="Chen J.S."/>
        </authorList>
    </citation>
    <scope>PROTEIN SEQUENCE OF 1-21</scope>
    <scope>CATALYTIC ACTIVITY</scope>
    <scope>FUNCTION</scope>
    <scope>SUBUNIT</scope>
    <scope>COFACTOR</scope>
    <scope>BIOPHYSICOCHEMICAL PROPERTIES</scope>
    <source>
        <strain>NESTE 255</strain>
        <strain>NRRL B-593</strain>
    </source>
</reference>
<reference key="3">
    <citation type="journal article" date="1998" name="J. Mol. Biol.">
        <title>NADP-dependent bacterial alcohol dehydrogenases: crystal structure, cofactor-binding and cofactor specificity of the ADHs of Clostridium beijerinckii and Thermoanaerobacter brockii.</title>
        <authorList>
            <person name="Korkhin Y."/>
            <person name="Kalb A.J."/>
            <person name="Peretz M."/>
            <person name="Bogin O."/>
            <person name="Burstein Y."/>
            <person name="Frolow F."/>
        </authorList>
    </citation>
    <scope>X-RAY CRYSTALLOGRAPHY (2.05 ANGSTROMS) IN COMPLEX WITH NADP AND ZINC</scope>
    <scope>SUBUNIT</scope>
    <scope>COFACTOR</scope>
</reference>
<reference key="4">
    <citation type="journal article" date="2002" name="Protein Sci.">
        <title>Structural basis for the enhanced thermal stability of alcohol dehydrogenase mutants from the mesophilic bacterium Clostridium beijerinckii: contribution of salt bridging.</title>
        <authorList>
            <person name="Bogin O."/>
            <person name="Levin I."/>
            <person name="Hacham Y."/>
            <person name="Tel-Or S."/>
            <person name="Peretz M."/>
            <person name="Frolow F."/>
            <person name="Burstein Y."/>
        </authorList>
    </citation>
    <scope>X-RAY CRYSTALLOGRAPHY (1.97 ANGSTROMS) IN COMPLEX WITH ZINC</scope>
</reference>
<reference key="5">
    <citation type="journal article" date="2010" name="Biochemistry">
        <title>Biochemical and structural properties of chimeras constructed by exchange of cofactor-binding domains in alcohol dehydrogenases from thermophilic and mesophilic microorganisms.</title>
        <authorList>
            <person name="Goihberg E."/>
            <person name="Peretz M."/>
            <person name="Tel-Or S."/>
            <person name="Dym O."/>
            <person name="Shimon L."/>
            <person name="Frolow F."/>
            <person name="Burstein Y."/>
        </authorList>
    </citation>
    <scope>X-RAY CRYSTALLOGRAPHY (1.90 ANGSTROMS) IN COMPLEX WITH ZINC</scope>
    <scope>SUBUNIT</scope>
    <scope>COFACTOR</scope>
    <scope>FUNCTION</scope>
    <scope>CATALYTIC ACTIVITY</scope>
</reference>
<comment type="function">
    <text evidence="2 3">Alcohol dehydrogenase with a preference for medium chain secondary alcohols, such as 2-butanol and isopropanol. Has very low activity with primary alcohols, such as ethanol. Under physiological conditions, the enzyme reduces aldehydes and 2-ketones to produce secondary alcohols. Is active with acetaldehyde and propionaldehyde.</text>
</comment>
<comment type="catalytic activity">
    <reaction evidence="2 3">
        <text>propan-2-ol + NADP(+) = acetone + NADPH + H(+)</text>
        <dbReference type="Rhea" id="RHEA:21792"/>
        <dbReference type="ChEBI" id="CHEBI:15347"/>
        <dbReference type="ChEBI" id="CHEBI:15378"/>
        <dbReference type="ChEBI" id="CHEBI:17824"/>
        <dbReference type="ChEBI" id="CHEBI:57783"/>
        <dbReference type="ChEBI" id="CHEBI:58349"/>
        <dbReference type="EC" id="1.1.1.80"/>
    </reaction>
</comment>
<comment type="cofactor">
    <cofactor evidence="2 3 4">
        <name>Zn(2+)</name>
        <dbReference type="ChEBI" id="CHEBI:29105"/>
    </cofactor>
    <text evidence="2 3 4">Binds 1 zinc ion per subunit.</text>
</comment>
<comment type="biophysicochemical properties">
    <kinetics>
        <KM evidence="3">5.7 mM for 2-butanol</KM>
        <KM evidence="3">10 mM for isopropanol</KM>
        <KM evidence="3">5.2 mM for 2-pentanol</KM>
        <KM evidence="3">1 mM for acetone</KM>
        <KM evidence="3">1.5 mM for 2-butanone</KM>
        <KM evidence="3">0.03 mM for NADPH</KM>
    </kinetics>
    <phDependence>
        <text evidence="3">Optimum pH is 8.</text>
    </phDependence>
</comment>
<comment type="subunit">
    <text evidence="1 2 3 4">Homotetramer.</text>
</comment>
<comment type="similarity">
    <text evidence="5">Belongs to the zinc-containing alcohol dehydrogenase family.</text>
</comment>
<protein>
    <recommendedName>
        <fullName>NADP-dependent isopropanol dehydrogenase</fullName>
        <ecNumber>1.1.1.80</ecNumber>
    </recommendedName>
    <alternativeName>
        <fullName>CbADH</fullName>
    </alternativeName>
</protein>
<accession>P25984</accession>
<accession>Q9R559</accession>
<evidence type="ECO:0000269" key="1">
    <source>
    </source>
</evidence>
<evidence type="ECO:0000269" key="2">
    <source>
    </source>
</evidence>
<evidence type="ECO:0000269" key="3">
    <source>
    </source>
</evidence>
<evidence type="ECO:0000269" key="4">
    <source>
    </source>
</evidence>
<evidence type="ECO:0000305" key="5"/>
<evidence type="ECO:0007829" key="6">
    <source>
        <dbReference type="PDB" id="1JQB"/>
    </source>
</evidence>
<evidence type="ECO:0007829" key="7">
    <source>
        <dbReference type="PDB" id="3FPL"/>
    </source>
</evidence>
<evidence type="ECO:0007829" key="8">
    <source>
        <dbReference type="PDB" id="3FTN"/>
    </source>
</evidence>
<proteinExistence type="evidence at protein level"/>
<organism>
    <name type="scientific">Clostridium beijerinckii</name>
    <name type="common">Clostridium MP</name>
    <dbReference type="NCBI Taxonomy" id="1520"/>
    <lineage>
        <taxon>Bacteria</taxon>
        <taxon>Bacillati</taxon>
        <taxon>Bacillota</taxon>
        <taxon>Clostridia</taxon>
        <taxon>Eubacteriales</taxon>
        <taxon>Clostridiaceae</taxon>
        <taxon>Clostridium</taxon>
    </lineage>
</organism>
<name>ADH_CLOBE</name>
<dbReference type="EC" id="1.1.1.80"/>
<dbReference type="EMBL" id="AF157307">
    <property type="protein sequence ID" value="AAA23199.2"/>
    <property type="molecule type" value="Genomic_DNA"/>
</dbReference>
<dbReference type="RefSeq" id="WP_077844196.1">
    <property type="nucleotide sequence ID" value="NZ_CP107022.1"/>
</dbReference>
<dbReference type="PDB" id="1JQB">
    <property type="method" value="X-ray"/>
    <property type="resolution" value="1.97 A"/>
    <property type="chains" value="A/B/C/D=1-351"/>
</dbReference>
<dbReference type="PDB" id="1KEV">
    <property type="method" value="X-ray"/>
    <property type="resolution" value="2.05 A"/>
    <property type="chains" value="A/B/C/D=1-351"/>
</dbReference>
<dbReference type="PDB" id="1PED">
    <property type="method" value="X-ray"/>
    <property type="resolution" value="2.15 A"/>
    <property type="chains" value="A/B/C/D=1-351"/>
</dbReference>
<dbReference type="PDB" id="2B83">
    <property type="method" value="X-ray"/>
    <property type="resolution" value="2.25 A"/>
    <property type="chains" value="A/B/C/D=1-351"/>
</dbReference>
<dbReference type="PDB" id="3FPL">
    <property type="method" value="X-ray"/>
    <property type="resolution" value="1.90 A"/>
    <property type="chains" value="A=1-152, A=296-351"/>
</dbReference>
<dbReference type="PDB" id="3FSR">
    <property type="method" value="X-ray"/>
    <property type="resolution" value="2.20 A"/>
    <property type="chains" value="A/B/C/D=152-295"/>
</dbReference>
<dbReference type="PDB" id="3FTN">
    <property type="method" value="X-ray"/>
    <property type="resolution" value="2.19 A"/>
    <property type="chains" value="A/B/C/D=152-295"/>
</dbReference>
<dbReference type="PDB" id="6SCH">
    <property type="method" value="X-ray"/>
    <property type="resolution" value="2.20 A"/>
    <property type="chains" value="A/B/C/D=1-351"/>
</dbReference>
<dbReference type="PDBsum" id="1JQB"/>
<dbReference type="PDBsum" id="1KEV"/>
<dbReference type="PDBsum" id="1PED"/>
<dbReference type="PDBsum" id="2B83"/>
<dbReference type="PDBsum" id="3FPL"/>
<dbReference type="PDBsum" id="3FSR"/>
<dbReference type="PDBsum" id="3FTN"/>
<dbReference type="PDBsum" id="6SCH"/>
<dbReference type="SMR" id="P25984"/>
<dbReference type="EvolutionaryTrace" id="P25984"/>
<dbReference type="GO" id="GO:0050009">
    <property type="term" value="F:isopropanol dehydrogenase (NADP+) activity"/>
    <property type="evidence" value="ECO:0007669"/>
    <property type="project" value="UniProtKB-EC"/>
</dbReference>
<dbReference type="GO" id="GO:0008270">
    <property type="term" value="F:zinc ion binding"/>
    <property type="evidence" value="ECO:0007669"/>
    <property type="project" value="InterPro"/>
</dbReference>
<dbReference type="CDD" id="cd08285">
    <property type="entry name" value="NADP_ADH"/>
    <property type="match status" value="1"/>
</dbReference>
<dbReference type="Gene3D" id="3.90.180.10">
    <property type="entry name" value="Medium-chain alcohol dehydrogenases, catalytic domain"/>
    <property type="match status" value="1"/>
</dbReference>
<dbReference type="Gene3D" id="3.40.50.720">
    <property type="entry name" value="NAD(P)-binding Rossmann-like Domain"/>
    <property type="match status" value="1"/>
</dbReference>
<dbReference type="InterPro" id="IPR013149">
    <property type="entry name" value="ADH-like_C"/>
</dbReference>
<dbReference type="InterPro" id="IPR013154">
    <property type="entry name" value="ADH-like_N"/>
</dbReference>
<dbReference type="InterPro" id="IPR002328">
    <property type="entry name" value="ADH_Zn_CS"/>
</dbReference>
<dbReference type="InterPro" id="IPR011032">
    <property type="entry name" value="GroES-like_sf"/>
</dbReference>
<dbReference type="InterPro" id="IPR036291">
    <property type="entry name" value="NAD(P)-bd_dom_sf"/>
</dbReference>
<dbReference type="InterPro" id="IPR020843">
    <property type="entry name" value="PKS_ER"/>
</dbReference>
<dbReference type="PANTHER" id="PTHR42813:SF4">
    <property type="entry name" value="NADP-DEPENDENT ISOPROPANOL DEHYDROGENASE"/>
    <property type="match status" value="1"/>
</dbReference>
<dbReference type="PANTHER" id="PTHR42813">
    <property type="entry name" value="ZINC-TYPE ALCOHOL DEHYDROGENASE-LIKE"/>
    <property type="match status" value="1"/>
</dbReference>
<dbReference type="Pfam" id="PF08240">
    <property type="entry name" value="ADH_N"/>
    <property type="match status" value="1"/>
</dbReference>
<dbReference type="Pfam" id="PF00107">
    <property type="entry name" value="ADH_zinc_N"/>
    <property type="match status" value="1"/>
</dbReference>
<dbReference type="SMART" id="SM00829">
    <property type="entry name" value="PKS_ER"/>
    <property type="match status" value="1"/>
</dbReference>
<dbReference type="SUPFAM" id="SSF50129">
    <property type="entry name" value="GroES-like"/>
    <property type="match status" value="1"/>
</dbReference>
<dbReference type="SUPFAM" id="SSF51735">
    <property type="entry name" value="NAD(P)-binding Rossmann-fold domains"/>
    <property type="match status" value="1"/>
</dbReference>
<dbReference type="PROSITE" id="PS00059">
    <property type="entry name" value="ADH_ZINC"/>
    <property type="match status" value="1"/>
</dbReference>
<gene>
    <name type="primary">adh</name>
</gene>